<evidence type="ECO:0000255" key="1">
    <source>
        <dbReference type="HAMAP-Rule" id="MF_00590"/>
    </source>
</evidence>
<protein>
    <recommendedName>
        <fullName evidence="1">GTP-dependent dephospho-CoA kinase</fullName>
        <ecNumber evidence="1">2.7.1.237</ecNumber>
    </recommendedName>
    <alternativeName>
        <fullName evidence="1">Dephospho-coenzyme A kinase</fullName>
        <shortName evidence="1">DPCK</shortName>
    </alternativeName>
</protein>
<organism>
    <name type="scientific">Cenarchaeum symbiosum (strain A)</name>
    <dbReference type="NCBI Taxonomy" id="414004"/>
    <lineage>
        <taxon>Archaea</taxon>
        <taxon>Nitrososphaerota</taxon>
        <taxon>Candidatus Cenarchaeales</taxon>
        <taxon>Candidatus Cenarchaeaceae</taxon>
        <taxon>Candidatus Cenarchaeum</taxon>
    </lineage>
</organism>
<reference key="1">
    <citation type="journal article" date="2006" name="Proc. Natl. Acad. Sci. U.S.A.">
        <title>Genomic analysis of the uncultivated marine crenarchaeote Cenarchaeum symbiosum.</title>
        <authorList>
            <person name="Hallam S.J."/>
            <person name="Konstantinidis K.T."/>
            <person name="Putnam N."/>
            <person name="Schleper C."/>
            <person name="Watanabe Y."/>
            <person name="Sugahara J."/>
            <person name="Preston C."/>
            <person name="de la Torre J."/>
            <person name="Richardson P.M."/>
            <person name="DeLong E.F."/>
        </authorList>
    </citation>
    <scope>NUCLEOTIDE SEQUENCE [LARGE SCALE GENOMIC DNA]</scope>
    <source>
        <strain>A</strain>
    </source>
</reference>
<feature type="chain" id="PRO_0000380044" description="GTP-dependent dephospho-CoA kinase">
    <location>
        <begin position="1"/>
        <end position="151"/>
    </location>
</feature>
<feature type="binding site" evidence="1">
    <location>
        <position position="30"/>
    </location>
    <ligand>
        <name>GTP</name>
        <dbReference type="ChEBI" id="CHEBI:37565"/>
    </ligand>
</feature>
<feature type="binding site" evidence="1">
    <location>
        <position position="31"/>
    </location>
    <ligand>
        <name>GTP</name>
        <dbReference type="ChEBI" id="CHEBI:37565"/>
    </ligand>
</feature>
<feature type="binding site" evidence="1">
    <location>
        <position position="49"/>
    </location>
    <ligand>
        <name>GTP</name>
        <dbReference type="ChEBI" id="CHEBI:37565"/>
    </ligand>
</feature>
<feature type="binding site" evidence="1">
    <location>
        <position position="51"/>
    </location>
    <ligand>
        <name>GTP</name>
        <dbReference type="ChEBI" id="CHEBI:37565"/>
    </ligand>
</feature>
<feature type="binding site" evidence="1">
    <location>
        <position position="104"/>
    </location>
    <ligand>
        <name>GTP</name>
        <dbReference type="ChEBI" id="CHEBI:37565"/>
    </ligand>
</feature>
<dbReference type="EC" id="2.7.1.237" evidence="1"/>
<dbReference type="EMBL" id="DP000238">
    <property type="protein sequence ID" value="ABK77598.1"/>
    <property type="molecule type" value="Genomic_DNA"/>
</dbReference>
<dbReference type="SMR" id="A0RW81"/>
<dbReference type="STRING" id="414004.CENSYa_0966"/>
<dbReference type="EnsemblBacteria" id="ABK77598">
    <property type="protein sequence ID" value="ABK77598"/>
    <property type="gene ID" value="CENSYa_0966"/>
</dbReference>
<dbReference type="KEGG" id="csy:CENSYa_0966"/>
<dbReference type="HOGENOM" id="CLU_120795_1_0_2"/>
<dbReference type="UniPathway" id="UPA00241"/>
<dbReference type="Proteomes" id="UP000000758">
    <property type="component" value="Chromosome"/>
</dbReference>
<dbReference type="GO" id="GO:0005525">
    <property type="term" value="F:GTP binding"/>
    <property type="evidence" value="ECO:0007669"/>
    <property type="project" value="UniProtKB-UniRule"/>
</dbReference>
<dbReference type="GO" id="GO:0016301">
    <property type="term" value="F:kinase activity"/>
    <property type="evidence" value="ECO:0007669"/>
    <property type="project" value="UniProtKB-UniRule"/>
</dbReference>
<dbReference type="GO" id="GO:0015937">
    <property type="term" value="P:coenzyme A biosynthetic process"/>
    <property type="evidence" value="ECO:0007669"/>
    <property type="project" value="UniProtKB-UniRule"/>
</dbReference>
<dbReference type="HAMAP" id="MF_00590">
    <property type="entry name" value="Dephospho_CoA_kinase_GTP_dep"/>
    <property type="match status" value="1"/>
</dbReference>
<dbReference type="InterPro" id="IPR007164">
    <property type="entry name" value="GTP-dep_dephospho-CoA_kin"/>
</dbReference>
<dbReference type="PANTHER" id="PTHR40732:SF1">
    <property type="entry name" value="GTP-DEPENDENT DEPHOSPHO-COA KINASE"/>
    <property type="match status" value="1"/>
</dbReference>
<dbReference type="PANTHER" id="PTHR40732">
    <property type="entry name" value="UPF0218 PROTEIN TK1697"/>
    <property type="match status" value="1"/>
</dbReference>
<dbReference type="Pfam" id="PF04019">
    <property type="entry name" value="DUF359"/>
    <property type="match status" value="1"/>
</dbReference>
<keyword id="KW-0173">Coenzyme A biosynthesis</keyword>
<keyword id="KW-0342">GTP-binding</keyword>
<keyword id="KW-0418">Kinase</keyword>
<keyword id="KW-0547">Nucleotide-binding</keyword>
<keyword id="KW-1185">Reference proteome</keyword>
<keyword id="KW-0808">Transferase</keyword>
<comment type="function">
    <text evidence="1">Catalyzes the GTP-dependent phosphorylation of the 3'-hydroxyl group of dephosphocoenzyme A to form coenzyme A (CoA).</text>
</comment>
<comment type="catalytic activity">
    <reaction evidence="1">
        <text>3'-dephospho-CoA + GTP = GDP + CoA + H(+)</text>
        <dbReference type="Rhea" id="RHEA:61156"/>
        <dbReference type="ChEBI" id="CHEBI:15378"/>
        <dbReference type="ChEBI" id="CHEBI:37565"/>
        <dbReference type="ChEBI" id="CHEBI:57287"/>
        <dbReference type="ChEBI" id="CHEBI:57328"/>
        <dbReference type="ChEBI" id="CHEBI:58189"/>
        <dbReference type="EC" id="2.7.1.237"/>
    </reaction>
</comment>
<comment type="pathway">
    <text evidence="1">Cofactor biosynthesis; coenzyme A biosynthesis.</text>
</comment>
<comment type="similarity">
    <text evidence="1">Belongs to the GTP-dependent DPCK family.</text>
</comment>
<gene>
    <name type="ordered locus">CENSYa_0966</name>
</gene>
<accession>A0RW81</accession>
<name>DPCKG_CENSY</name>
<sequence length="151" mass="15839">MGTLILDSMVNKEAVLREAPPGTILVTVGDVTSERISGFGMTPLLQIIDGKTRRAAHEPAGPPPDVEIIRCENPAGGISPECIETIRRALGSSSPLRLVVSGEEDLLVIPACIYAPDGAVIMYGQPGRGLVAIHVDAGIRYKAKGLLDSVS</sequence>
<proteinExistence type="inferred from homology"/>